<dbReference type="EMBL" id="AE003849">
    <property type="protein sequence ID" value="AAF83987.1"/>
    <property type="molecule type" value="Genomic_DNA"/>
</dbReference>
<dbReference type="PIR" id="B82715">
    <property type="entry name" value="B82715"/>
</dbReference>
<dbReference type="RefSeq" id="WP_010893689.1">
    <property type="nucleotide sequence ID" value="NC_002488.3"/>
</dbReference>
<dbReference type="SMR" id="Q9PE51"/>
<dbReference type="STRING" id="160492.XF_1177"/>
<dbReference type="KEGG" id="xfa:XF_1177"/>
<dbReference type="eggNOG" id="COG0203">
    <property type="taxonomic scope" value="Bacteria"/>
</dbReference>
<dbReference type="HOGENOM" id="CLU_074407_2_0_6"/>
<dbReference type="Proteomes" id="UP000000812">
    <property type="component" value="Chromosome"/>
</dbReference>
<dbReference type="GO" id="GO:0022625">
    <property type="term" value="C:cytosolic large ribosomal subunit"/>
    <property type="evidence" value="ECO:0007669"/>
    <property type="project" value="TreeGrafter"/>
</dbReference>
<dbReference type="GO" id="GO:0003735">
    <property type="term" value="F:structural constituent of ribosome"/>
    <property type="evidence" value="ECO:0007669"/>
    <property type="project" value="InterPro"/>
</dbReference>
<dbReference type="GO" id="GO:0006412">
    <property type="term" value="P:translation"/>
    <property type="evidence" value="ECO:0007669"/>
    <property type="project" value="UniProtKB-UniRule"/>
</dbReference>
<dbReference type="FunFam" id="3.90.1030.10:FF:000001">
    <property type="entry name" value="50S ribosomal protein L17"/>
    <property type="match status" value="1"/>
</dbReference>
<dbReference type="Gene3D" id="3.90.1030.10">
    <property type="entry name" value="Ribosomal protein L17"/>
    <property type="match status" value="1"/>
</dbReference>
<dbReference type="HAMAP" id="MF_01368">
    <property type="entry name" value="Ribosomal_bL17"/>
    <property type="match status" value="1"/>
</dbReference>
<dbReference type="InterPro" id="IPR000456">
    <property type="entry name" value="Ribosomal_bL17"/>
</dbReference>
<dbReference type="InterPro" id="IPR047859">
    <property type="entry name" value="Ribosomal_bL17_CS"/>
</dbReference>
<dbReference type="InterPro" id="IPR036373">
    <property type="entry name" value="Ribosomal_bL17_sf"/>
</dbReference>
<dbReference type="NCBIfam" id="TIGR00059">
    <property type="entry name" value="L17"/>
    <property type="match status" value="1"/>
</dbReference>
<dbReference type="PANTHER" id="PTHR14413:SF16">
    <property type="entry name" value="LARGE RIBOSOMAL SUBUNIT PROTEIN BL17M"/>
    <property type="match status" value="1"/>
</dbReference>
<dbReference type="PANTHER" id="PTHR14413">
    <property type="entry name" value="RIBOSOMAL PROTEIN L17"/>
    <property type="match status" value="1"/>
</dbReference>
<dbReference type="Pfam" id="PF01196">
    <property type="entry name" value="Ribosomal_L17"/>
    <property type="match status" value="1"/>
</dbReference>
<dbReference type="SUPFAM" id="SSF64263">
    <property type="entry name" value="Prokaryotic ribosomal protein L17"/>
    <property type="match status" value="1"/>
</dbReference>
<dbReference type="PROSITE" id="PS01167">
    <property type="entry name" value="RIBOSOMAL_L17"/>
    <property type="match status" value="1"/>
</dbReference>
<protein>
    <recommendedName>
        <fullName evidence="1">Large ribosomal subunit protein bL17</fullName>
    </recommendedName>
    <alternativeName>
        <fullName evidence="2">50S ribosomal protein L17</fullName>
    </alternativeName>
</protein>
<organism>
    <name type="scientific">Xylella fastidiosa (strain 9a5c)</name>
    <dbReference type="NCBI Taxonomy" id="160492"/>
    <lineage>
        <taxon>Bacteria</taxon>
        <taxon>Pseudomonadati</taxon>
        <taxon>Pseudomonadota</taxon>
        <taxon>Gammaproteobacteria</taxon>
        <taxon>Lysobacterales</taxon>
        <taxon>Lysobacteraceae</taxon>
        <taxon>Xylella</taxon>
    </lineage>
</organism>
<feature type="chain" id="PRO_0000306403" description="Large ribosomal subunit protein bL17">
    <location>
        <begin position="1"/>
        <end position="126"/>
    </location>
</feature>
<evidence type="ECO:0000255" key="1">
    <source>
        <dbReference type="HAMAP-Rule" id="MF_01368"/>
    </source>
</evidence>
<evidence type="ECO:0000305" key="2"/>
<gene>
    <name evidence="1" type="primary">rplQ</name>
    <name type="ordered locus">XF_1177</name>
</gene>
<comment type="subunit">
    <text evidence="1">Part of the 50S ribosomal subunit. Contacts protein L32.</text>
</comment>
<comment type="similarity">
    <text evidence="1">Belongs to the bacterial ribosomal protein bL17 family.</text>
</comment>
<reference key="1">
    <citation type="journal article" date="2000" name="Nature">
        <title>The genome sequence of the plant pathogen Xylella fastidiosa.</title>
        <authorList>
            <person name="Simpson A.J.G."/>
            <person name="Reinach F.C."/>
            <person name="Arruda P."/>
            <person name="Abreu F.A."/>
            <person name="Acencio M."/>
            <person name="Alvarenga R."/>
            <person name="Alves L.M.C."/>
            <person name="Araya J.E."/>
            <person name="Baia G.S."/>
            <person name="Baptista C.S."/>
            <person name="Barros M.H."/>
            <person name="Bonaccorsi E.D."/>
            <person name="Bordin S."/>
            <person name="Bove J.M."/>
            <person name="Briones M.R.S."/>
            <person name="Bueno M.R.P."/>
            <person name="Camargo A.A."/>
            <person name="Camargo L.E.A."/>
            <person name="Carraro D.M."/>
            <person name="Carrer H."/>
            <person name="Colauto N.B."/>
            <person name="Colombo C."/>
            <person name="Costa F.F."/>
            <person name="Costa M.C.R."/>
            <person name="Costa-Neto C.M."/>
            <person name="Coutinho L.L."/>
            <person name="Cristofani M."/>
            <person name="Dias-Neto E."/>
            <person name="Docena C."/>
            <person name="El-Dorry H."/>
            <person name="Facincani A.P."/>
            <person name="Ferreira A.J.S."/>
            <person name="Ferreira V.C.A."/>
            <person name="Ferro J.A."/>
            <person name="Fraga J.S."/>
            <person name="Franca S.C."/>
            <person name="Franco M.C."/>
            <person name="Frohme M."/>
            <person name="Furlan L.R."/>
            <person name="Garnier M."/>
            <person name="Goldman G.H."/>
            <person name="Goldman M.H.S."/>
            <person name="Gomes S.L."/>
            <person name="Gruber A."/>
            <person name="Ho P.L."/>
            <person name="Hoheisel J.D."/>
            <person name="Junqueira M.L."/>
            <person name="Kemper E.L."/>
            <person name="Kitajima J.P."/>
            <person name="Krieger J.E."/>
            <person name="Kuramae E.E."/>
            <person name="Laigret F."/>
            <person name="Lambais M.R."/>
            <person name="Leite L.C.C."/>
            <person name="Lemos E.G.M."/>
            <person name="Lemos M.V.F."/>
            <person name="Lopes S.A."/>
            <person name="Lopes C.R."/>
            <person name="Machado J.A."/>
            <person name="Machado M.A."/>
            <person name="Madeira A.M.B.N."/>
            <person name="Madeira H.M.F."/>
            <person name="Marino C.L."/>
            <person name="Marques M.V."/>
            <person name="Martins E.A.L."/>
            <person name="Martins E.M.F."/>
            <person name="Matsukuma A.Y."/>
            <person name="Menck C.F.M."/>
            <person name="Miracca E.C."/>
            <person name="Miyaki C.Y."/>
            <person name="Monteiro-Vitorello C.B."/>
            <person name="Moon D.H."/>
            <person name="Nagai M.A."/>
            <person name="Nascimento A.L.T.O."/>
            <person name="Netto L.E.S."/>
            <person name="Nhani A. Jr."/>
            <person name="Nobrega F.G."/>
            <person name="Nunes L.R."/>
            <person name="Oliveira M.A."/>
            <person name="de Oliveira M.C."/>
            <person name="de Oliveira R.C."/>
            <person name="Palmieri D.A."/>
            <person name="Paris A."/>
            <person name="Peixoto B.R."/>
            <person name="Pereira G.A.G."/>
            <person name="Pereira H.A. Jr."/>
            <person name="Pesquero J.B."/>
            <person name="Quaggio R.B."/>
            <person name="Roberto P.G."/>
            <person name="Rodrigues V."/>
            <person name="de Rosa A.J.M."/>
            <person name="de Rosa V.E. Jr."/>
            <person name="de Sa R.G."/>
            <person name="Santelli R.V."/>
            <person name="Sawasaki H.E."/>
            <person name="da Silva A.C.R."/>
            <person name="da Silva A.M."/>
            <person name="da Silva F.R."/>
            <person name="Silva W.A. Jr."/>
            <person name="da Silveira J.F."/>
            <person name="Silvestri M.L.Z."/>
            <person name="Siqueira W.J."/>
            <person name="de Souza A.A."/>
            <person name="de Souza A.P."/>
            <person name="Terenzi M.F."/>
            <person name="Truffi D."/>
            <person name="Tsai S.M."/>
            <person name="Tsuhako M.H."/>
            <person name="Vallada H."/>
            <person name="Van Sluys M.A."/>
            <person name="Verjovski-Almeida S."/>
            <person name="Vettore A.L."/>
            <person name="Zago M.A."/>
            <person name="Zatz M."/>
            <person name="Meidanis J."/>
            <person name="Setubal J.C."/>
        </authorList>
    </citation>
    <scope>NUCLEOTIDE SEQUENCE [LARGE SCALE GENOMIC DNA]</scope>
    <source>
        <strain>9a5c</strain>
    </source>
</reference>
<accession>Q9PE51</accession>
<proteinExistence type="inferred from homology"/>
<name>RL17_XYLFA</name>
<sequence length="126" mass="14359">MRHQKSGRKFNRTDAHRGAMFSNMVASLFKYQLIKTTLPKAKELRRVAEPLITLAKVDSVANRRLAFARLRNKEAVGILFSNLGPRYVTRPGGYIRLLKCGFRHGDNAPMAYVEMLERPIIAEEVT</sequence>
<keyword id="KW-0687">Ribonucleoprotein</keyword>
<keyword id="KW-0689">Ribosomal protein</keyword>